<dbReference type="EC" id="3.1.2.6" evidence="1"/>
<dbReference type="EMBL" id="CP000348">
    <property type="protein sequence ID" value="ABJ78880.1"/>
    <property type="molecule type" value="Genomic_DNA"/>
</dbReference>
<dbReference type="SMR" id="Q051W5"/>
<dbReference type="KEGG" id="lbl:LBL_1390"/>
<dbReference type="HOGENOM" id="CLU_030571_4_1_12"/>
<dbReference type="UniPathway" id="UPA00619">
    <property type="reaction ID" value="UER00676"/>
</dbReference>
<dbReference type="GO" id="GO:0004416">
    <property type="term" value="F:hydroxyacylglutathione hydrolase activity"/>
    <property type="evidence" value="ECO:0007669"/>
    <property type="project" value="UniProtKB-UniRule"/>
</dbReference>
<dbReference type="GO" id="GO:0046872">
    <property type="term" value="F:metal ion binding"/>
    <property type="evidence" value="ECO:0007669"/>
    <property type="project" value="UniProtKB-KW"/>
</dbReference>
<dbReference type="GO" id="GO:0019243">
    <property type="term" value="P:methylglyoxal catabolic process to D-lactate via S-lactoyl-glutathione"/>
    <property type="evidence" value="ECO:0007669"/>
    <property type="project" value="InterPro"/>
</dbReference>
<dbReference type="CDD" id="cd07723">
    <property type="entry name" value="hydroxyacylglutathione_hydrolase_MBL-fold"/>
    <property type="match status" value="1"/>
</dbReference>
<dbReference type="Gene3D" id="3.60.15.10">
    <property type="entry name" value="Ribonuclease Z/Hydroxyacylglutathione hydrolase-like"/>
    <property type="match status" value="1"/>
</dbReference>
<dbReference type="HAMAP" id="MF_01374">
    <property type="entry name" value="Glyoxalase_2"/>
    <property type="match status" value="1"/>
</dbReference>
<dbReference type="InterPro" id="IPR035680">
    <property type="entry name" value="Clx_II_MBL"/>
</dbReference>
<dbReference type="InterPro" id="IPR050110">
    <property type="entry name" value="Glyoxalase_II_hydrolase"/>
</dbReference>
<dbReference type="InterPro" id="IPR032282">
    <property type="entry name" value="HAGH_C"/>
</dbReference>
<dbReference type="InterPro" id="IPR017782">
    <property type="entry name" value="Hydroxyacylglutathione_Hdrlase"/>
</dbReference>
<dbReference type="InterPro" id="IPR001279">
    <property type="entry name" value="Metallo-B-lactamas"/>
</dbReference>
<dbReference type="InterPro" id="IPR036866">
    <property type="entry name" value="RibonucZ/Hydroxyglut_hydro"/>
</dbReference>
<dbReference type="PANTHER" id="PTHR43705">
    <property type="entry name" value="HYDROXYACYLGLUTATHIONE HYDROLASE"/>
    <property type="match status" value="1"/>
</dbReference>
<dbReference type="PANTHER" id="PTHR43705:SF1">
    <property type="entry name" value="HYDROXYACYLGLUTATHIONE HYDROLASE GLOB"/>
    <property type="match status" value="1"/>
</dbReference>
<dbReference type="Pfam" id="PF16123">
    <property type="entry name" value="HAGH_C"/>
    <property type="match status" value="1"/>
</dbReference>
<dbReference type="Pfam" id="PF00753">
    <property type="entry name" value="Lactamase_B"/>
    <property type="match status" value="1"/>
</dbReference>
<dbReference type="SMART" id="SM00849">
    <property type="entry name" value="Lactamase_B"/>
    <property type="match status" value="1"/>
</dbReference>
<dbReference type="SUPFAM" id="SSF56281">
    <property type="entry name" value="Metallo-hydrolase/oxidoreductase"/>
    <property type="match status" value="1"/>
</dbReference>
<sequence>MEVFRIYTNSPLRNFTYILRNSETSETLSIDPYDSEQIEKFLDSKGWTLDFLLNTHEHEDHTSGNTGLVQRYGCTVYSHPEGIGKIPHATHPLKKGDFLLRSSKEYLEILDTPGHTFCHVCLLLVENQKPKAIFTGDTIFNAGVGNCHHGGDPEVLAKTILEQFYPLEEEILLYPGHDYLETNLKFTLSLDPSNQDAIRTLEECSRLSKNVEFLTTDLRKERKINTFFQCDKPSLELRKNVSKKIPFKQLLDNDPTSFFISLRSLRDQW</sequence>
<keyword id="KW-0378">Hydrolase</keyword>
<keyword id="KW-0479">Metal-binding</keyword>
<keyword id="KW-0862">Zinc</keyword>
<accession>Q051W5</accession>
<evidence type="ECO:0000255" key="1">
    <source>
        <dbReference type="HAMAP-Rule" id="MF_01374"/>
    </source>
</evidence>
<name>GLO2_LEPBL</name>
<proteinExistence type="inferred from homology"/>
<comment type="function">
    <text evidence="1">Thiolesterase that catalyzes the hydrolysis of S-D-lactoyl-glutathione to form glutathione and D-lactic acid.</text>
</comment>
<comment type="catalytic activity">
    <reaction evidence="1">
        <text>an S-(2-hydroxyacyl)glutathione + H2O = a 2-hydroxy carboxylate + glutathione + H(+)</text>
        <dbReference type="Rhea" id="RHEA:21864"/>
        <dbReference type="ChEBI" id="CHEBI:15377"/>
        <dbReference type="ChEBI" id="CHEBI:15378"/>
        <dbReference type="ChEBI" id="CHEBI:57925"/>
        <dbReference type="ChEBI" id="CHEBI:58896"/>
        <dbReference type="ChEBI" id="CHEBI:71261"/>
        <dbReference type="EC" id="3.1.2.6"/>
    </reaction>
</comment>
<comment type="cofactor">
    <cofactor evidence="1">
        <name>Zn(2+)</name>
        <dbReference type="ChEBI" id="CHEBI:29105"/>
    </cofactor>
    <text evidence="1">Binds 2 Zn(2+) ions per subunit.</text>
</comment>
<comment type="pathway">
    <text evidence="1">Secondary metabolite metabolism; methylglyoxal degradation; (R)-lactate from methylglyoxal: step 2/2.</text>
</comment>
<comment type="subunit">
    <text evidence="1">Monomer.</text>
</comment>
<comment type="similarity">
    <text evidence="1">Belongs to the metallo-beta-lactamase superfamily. Glyoxalase II family.</text>
</comment>
<organism>
    <name type="scientific">Leptospira borgpetersenii serovar Hardjo-bovis (strain L550)</name>
    <dbReference type="NCBI Taxonomy" id="355276"/>
    <lineage>
        <taxon>Bacteria</taxon>
        <taxon>Pseudomonadati</taxon>
        <taxon>Spirochaetota</taxon>
        <taxon>Spirochaetia</taxon>
        <taxon>Leptospirales</taxon>
        <taxon>Leptospiraceae</taxon>
        <taxon>Leptospira</taxon>
    </lineage>
</organism>
<protein>
    <recommendedName>
        <fullName evidence="1">Hydroxyacylglutathione hydrolase</fullName>
        <ecNumber evidence="1">3.1.2.6</ecNumber>
    </recommendedName>
    <alternativeName>
        <fullName evidence="1">Glyoxalase II</fullName>
        <shortName evidence="1">Glx II</shortName>
    </alternativeName>
</protein>
<feature type="chain" id="PRO_0000309657" description="Hydroxyacylglutathione hydrolase">
    <location>
        <begin position="1"/>
        <end position="269"/>
    </location>
</feature>
<feature type="binding site" evidence="1">
    <location>
        <position position="56"/>
    </location>
    <ligand>
        <name>Zn(2+)</name>
        <dbReference type="ChEBI" id="CHEBI:29105"/>
        <label>1</label>
    </ligand>
</feature>
<feature type="binding site" evidence="1">
    <location>
        <position position="58"/>
    </location>
    <ligand>
        <name>Zn(2+)</name>
        <dbReference type="ChEBI" id="CHEBI:29105"/>
        <label>1</label>
    </ligand>
</feature>
<feature type="binding site" evidence="1">
    <location>
        <position position="60"/>
    </location>
    <ligand>
        <name>Zn(2+)</name>
        <dbReference type="ChEBI" id="CHEBI:29105"/>
        <label>2</label>
    </ligand>
</feature>
<feature type="binding site" evidence="1">
    <location>
        <position position="61"/>
    </location>
    <ligand>
        <name>Zn(2+)</name>
        <dbReference type="ChEBI" id="CHEBI:29105"/>
        <label>2</label>
    </ligand>
</feature>
<feature type="binding site" evidence="1">
    <location>
        <position position="115"/>
    </location>
    <ligand>
        <name>Zn(2+)</name>
        <dbReference type="ChEBI" id="CHEBI:29105"/>
        <label>1</label>
    </ligand>
</feature>
<feature type="binding site" evidence="1">
    <location>
        <position position="137"/>
    </location>
    <ligand>
        <name>Zn(2+)</name>
        <dbReference type="ChEBI" id="CHEBI:29105"/>
        <label>1</label>
    </ligand>
</feature>
<feature type="binding site" evidence="1">
    <location>
        <position position="137"/>
    </location>
    <ligand>
        <name>Zn(2+)</name>
        <dbReference type="ChEBI" id="CHEBI:29105"/>
        <label>2</label>
    </ligand>
</feature>
<feature type="binding site" evidence="1">
    <location>
        <position position="177"/>
    </location>
    <ligand>
        <name>Zn(2+)</name>
        <dbReference type="ChEBI" id="CHEBI:29105"/>
        <label>2</label>
    </ligand>
</feature>
<reference key="1">
    <citation type="journal article" date="2006" name="Proc. Natl. Acad. Sci. U.S.A.">
        <title>Genome reduction in Leptospira borgpetersenii reflects limited transmission potential.</title>
        <authorList>
            <person name="Bulach D.M."/>
            <person name="Zuerner R.L."/>
            <person name="Wilson P."/>
            <person name="Seemann T."/>
            <person name="McGrath A."/>
            <person name="Cullen P.A."/>
            <person name="Davis J."/>
            <person name="Johnson M."/>
            <person name="Kuczek E."/>
            <person name="Alt D.P."/>
            <person name="Peterson-Burch B."/>
            <person name="Coppel R.L."/>
            <person name="Rood J.I."/>
            <person name="Davies J.K."/>
            <person name="Adler B."/>
        </authorList>
    </citation>
    <scope>NUCLEOTIDE SEQUENCE [LARGE SCALE GENOMIC DNA]</scope>
    <source>
        <strain>L550</strain>
    </source>
</reference>
<gene>
    <name evidence="1" type="primary">gloB</name>
    <name type="ordered locus">LBL_1390</name>
</gene>